<protein>
    <recommendedName>
        <fullName evidence="1">Trigger factor</fullName>
        <shortName evidence="1">TF</shortName>
        <ecNumber evidence="1">5.2.1.8</ecNumber>
    </recommendedName>
    <alternativeName>
        <fullName evidence="1">PPIase</fullName>
    </alternativeName>
</protein>
<dbReference type="EC" id="5.2.1.8" evidence="1"/>
<dbReference type="EMBL" id="CP000304">
    <property type="protein sequence ID" value="ABP79728.1"/>
    <property type="molecule type" value="Genomic_DNA"/>
</dbReference>
<dbReference type="RefSeq" id="WP_011913197.1">
    <property type="nucleotide sequence ID" value="NC_009434.1"/>
</dbReference>
<dbReference type="SMR" id="A4VL77"/>
<dbReference type="KEGG" id="psa:PST_2060"/>
<dbReference type="eggNOG" id="COG0544">
    <property type="taxonomic scope" value="Bacteria"/>
</dbReference>
<dbReference type="HOGENOM" id="CLU_033058_2_0_6"/>
<dbReference type="Proteomes" id="UP000000233">
    <property type="component" value="Chromosome"/>
</dbReference>
<dbReference type="GO" id="GO:0005737">
    <property type="term" value="C:cytoplasm"/>
    <property type="evidence" value="ECO:0007669"/>
    <property type="project" value="UniProtKB-SubCell"/>
</dbReference>
<dbReference type="GO" id="GO:0003755">
    <property type="term" value="F:peptidyl-prolyl cis-trans isomerase activity"/>
    <property type="evidence" value="ECO:0007669"/>
    <property type="project" value="UniProtKB-UniRule"/>
</dbReference>
<dbReference type="GO" id="GO:0044183">
    <property type="term" value="F:protein folding chaperone"/>
    <property type="evidence" value="ECO:0007669"/>
    <property type="project" value="TreeGrafter"/>
</dbReference>
<dbReference type="GO" id="GO:0043022">
    <property type="term" value="F:ribosome binding"/>
    <property type="evidence" value="ECO:0007669"/>
    <property type="project" value="TreeGrafter"/>
</dbReference>
<dbReference type="GO" id="GO:0051083">
    <property type="term" value="P:'de novo' cotranslational protein folding"/>
    <property type="evidence" value="ECO:0007669"/>
    <property type="project" value="TreeGrafter"/>
</dbReference>
<dbReference type="GO" id="GO:0051301">
    <property type="term" value="P:cell division"/>
    <property type="evidence" value="ECO:0007669"/>
    <property type="project" value="UniProtKB-KW"/>
</dbReference>
<dbReference type="GO" id="GO:0061077">
    <property type="term" value="P:chaperone-mediated protein folding"/>
    <property type="evidence" value="ECO:0007669"/>
    <property type="project" value="TreeGrafter"/>
</dbReference>
<dbReference type="GO" id="GO:0015031">
    <property type="term" value="P:protein transport"/>
    <property type="evidence" value="ECO:0007669"/>
    <property type="project" value="UniProtKB-UniRule"/>
</dbReference>
<dbReference type="GO" id="GO:0043335">
    <property type="term" value="P:protein unfolding"/>
    <property type="evidence" value="ECO:0007669"/>
    <property type="project" value="TreeGrafter"/>
</dbReference>
<dbReference type="FunFam" id="3.10.50.40:FF:000001">
    <property type="entry name" value="Trigger factor"/>
    <property type="match status" value="1"/>
</dbReference>
<dbReference type="FunFam" id="3.30.70.1050:FF:000001">
    <property type="entry name" value="Trigger factor"/>
    <property type="match status" value="1"/>
</dbReference>
<dbReference type="Gene3D" id="3.10.50.40">
    <property type="match status" value="1"/>
</dbReference>
<dbReference type="Gene3D" id="3.30.70.1050">
    <property type="entry name" value="Trigger factor ribosome-binding domain"/>
    <property type="match status" value="1"/>
</dbReference>
<dbReference type="Gene3D" id="1.10.3120.10">
    <property type="entry name" value="Trigger factor, C-terminal domain"/>
    <property type="match status" value="1"/>
</dbReference>
<dbReference type="HAMAP" id="MF_00303">
    <property type="entry name" value="Trigger_factor_Tig"/>
    <property type="match status" value="1"/>
</dbReference>
<dbReference type="InterPro" id="IPR046357">
    <property type="entry name" value="PPIase_dom_sf"/>
</dbReference>
<dbReference type="InterPro" id="IPR001179">
    <property type="entry name" value="PPIase_FKBP_dom"/>
</dbReference>
<dbReference type="InterPro" id="IPR005215">
    <property type="entry name" value="Trig_fac"/>
</dbReference>
<dbReference type="InterPro" id="IPR008880">
    <property type="entry name" value="Trigger_fac_C"/>
</dbReference>
<dbReference type="InterPro" id="IPR037041">
    <property type="entry name" value="Trigger_fac_C_sf"/>
</dbReference>
<dbReference type="InterPro" id="IPR008881">
    <property type="entry name" value="Trigger_fac_ribosome-bd_bac"/>
</dbReference>
<dbReference type="InterPro" id="IPR036611">
    <property type="entry name" value="Trigger_fac_ribosome-bd_sf"/>
</dbReference>
<dbReference type="InterPro" id="IPR027304">
    <property type="entry name" value="Trigger_fact/SurA_dom_sf"/>
</dbReference>
<dbReference type="NCBIfam" id="TIGR00115">
    <property type="entry name" value="tig"/>
    <property type="match status" value="1"/>
</dbReference>
<dbReference type="PANTHER" id="PTHR30560">
    <property type="entry name" value="TRIGGER FACTOR CHAPERONE AND PEPTIDYL-PROLYL CIS/TRANS ISOMERASE"/>
    <property type="match status" value="1"/>
</dbReference>
<dbReference type="PANTHER" id="PTHR30560:SF3">
    <property type="entry name" value="TRIGGER FACTOR-LIKE PROTEIN TIG, CHLOROPLASTIC"/>
    <property type="match status" value="1"/>
</dbReference>
<dbReference type="Pfam" id="PF00254">
    <property type="entry name" value="FKBP_C"/>
    <property type="match status" value="1"/>
</dbReference>
<dbReference type="Pfam" id="PF05698">
    <property type="entry name" value="Trigger_C"/>
    <property type="match status" value="1"/>
</dbReference>
<dbReference type="Pfam" id="PF05697">
    <property type="entry name" value="Trigger_N"/>
    <property type="match status" value="1"/>
</dbReference>
<dbReference type="PIRSF" id="PIRSF003095">
    <property type="entry name" value="Trigger_factor"/>
    <property type="match status" value="1"/>
</dbReference>
<dbReference type="SUPFAM" id="SSF54534">
    <property type="entry name" value="FKBP-like"/>
    <property type="match status" value="1"/>
</dbReference>
<dbReference type="SUPFAM" id="SSF109998">
    <property type="entry name" value="Triger factor/SurA peptide-binding domain-like"/>
    <property type="match status" value="1"/>
</dbReference>
<dbReference type="SUPFAM" id="SSF102735">
    <property type="entry name" value="Trigger factor ribosome-binding domain"/>
    <property type="match status" value="1"/>
</dbReference>
<dbReference type="PROSITE" id="PS50059">
    <property type="entry name" value="FKBP_PPIASE"/>
    <property type="match status" value="1"/>
</dbReference>
<sequence length="436" mass="48311">MQVSVESTSALERRMTIGVPVERIETEVNKRLQQTASRAKIPGFRPGKVPMSVIRQRYEEAARQEALGDLIQSTFYEAIVAEKLNPAGAPSVEPKVFEKGKDLEYVATFEVFPEFEVAGFEAIEIERLQAEVTDADVDNMLEILRKQNTRFESVERAAENGDQVNIDFVGKIDGEAFAGGSAKGTQLVLGSGRMIPGFEDALVGAKAGEERVITPTFPEDYQNLDLAGKTAEFTVTVNSVAAPQLPELNEEFFAQFGVQEGGVEGFRAEVKKNMERELRQAIKTKVKNQVMEGLVAGNPIEVPKALVDNEVNRLRVQAVQQFGGNIKPDQLPAELFQEQAKRRVVLGLIVAEVVKQKELKPDEARVRELIEEMASAYQEPEQVVAWYYKNAEQLNEVRSVVLEEQVVDTVLQQAKVTDKSVSYEEAVKPAEAPQAA</sequence>
<reference key="1">
    <citation type="journal article" date="2008" name="Proc. Natl. Acad. Sci. U.S.A.">
        <title>Nitrogen fixation island and rhizosphere competence traits in the genome of root-associated Pseudomonas stutzeri A1501.</title>
        <authorList>
            <person name="Yan Y."/>
            <person name="Yang J."/>
            <person name="Dou Y."/>
            <person name="Chen M."/>
            <person name="Ping S."/>
            <person name="Peng J."/>
            <person name="Lu W."/>
            <person name="Zhang W."/>
            <person name="Yao Z."/>
            <person name="Li H."/>
            <person name="Liu W."/>
            <person name="He S."/>
            <person name="Geng L."/>
            <person name="Zhang X."/>
            <person name="Yang F."/>
            <person name="Yu H."/>
            <person name="Zhan Y."/>
            <person name="Li D."/>
            <person name="Lin Z."/>
            <person name="Wang Y."/>
            <person name="Elmerich C."/>
            <person name="Lin M."/>
            <person name="Jin Q."/>
        </authorList>
    </citation>
    <scope>NUCLEOTIDE SEQUENCE [LARGE SCALE GENOMIC DNA]</scope>
    <source>
        <strain>A1501</strain>
    </source>
</reference>
<name>TIG_STUS1</name>
<organism>
    <name type="scientific">Stutzerimonas stutzeri (strain A1501)</name>
    <name type="common">Pseudomonas stutzeri</name>
    <dbReference type="NCBI Taxonomy" id="379731"/>
    <lineage>
        <taxon>Bacteria</taxon>
        <taxon>Pseudomonadati</taxon>
        <taxon>Pseudomonadota</taxon>
        <taxon>Gammaproteobacteria</taxon>
        <taxon>Pseudomonadales</taxon>
        <taxon>Pseudomonadaceae</taxon>
        <taxon>Stutzerimonas</taxon>
    </lineage>
</organism>
<gene>
    <name evidence="1" type="primary">tig</name>
    <name type="ordered locus">PST_2060</name>
</gene>
<proteinExistence type="inferred from homology"/>
<accession>A4VL77</accession>
<comment type="function">
    <text evidence="1">Involved in protein export. Acts as a chaperone by maintaining the newly synthesized protein in an open conformation. Functions as a peptidyl-prolyl cis-trans isomerase.</text>
</comment>
<comment type="catalytic activity">
    <reaction evidence="1">
        <text>[protein]-peptidylproline (omega=180) = [protein]-peptidylproline (omega=0)</text>
        <dbReference type="Rhea" id="RHEA:16237"/>
        <dbReference type="Rhea" id="RHEA-COMP:10747"/>
        <dbReference type="Rhea" id="RHEA-COMP:10748"/>
        <dbReference type="ChEBI" id="CHEBI:83833"/>
        <dbReference type="ChEBI" id="CHEBI:83834"/>
        <dbReference type="EC" id="5.2.1.8"/>
    </reaction>
</comment>
<comment type="subcellular location">
    <subcellularLocation>
        <location>Cytoplasm</location>
    </subcellularLocation>
    <text evidence="1">About half TF is bound to the ribosome near the polypeptide exit tunnel while the other half is free in the cytoplasm.</text>
</comment>
<comment type="domain">
    <text evidence="1">Consists of 3 domains; the N-terminus binds the ribosome, the middle domain has PPIase activity, while the C-terminus has intrinsic chaperone activity on its own.</text>
</comment>
<comment type="similarity">
    <text evidence="1">Belongs to the FKBP-type PPIase family. Tig subfamily.</text>
</comment>
<evidence type="ECO:0000255" key="1">
    <source>
        <dbReference type="HAMAP-Rule" id="MF_00303"/>
    </source>
</evidence>
<feature type="chain" id="PRO_1000022737" description="Trigger factor">
    <location>
        <begin position="1"/>
        <end position="436"/>
    </location>
</feature>
<feature type="domain" description="PPIase FKBP-type" evidence="1">
    <location>
        <begin position="161"/>
        <end position="246"/>
    </location>
</feature>
<keyword id="KW-0131">Cell cycle</keyword>
<keyword id="KW-0132">Cell division</keyword>
<keyword id="KW-0143">Chaperone</keyword>
<keyword id="KW-0963">Cytoplasm</keyword>
<keyword id="KW-0413">Isomerase</keyword>
<keyword id="KW-1185">Reference proteome</keyword>
<keyword id="KW-0697">Rotamase</keyword>